<accession>Q1J449</accession>
<proteinExistence type="inferred from homology"/>
<feature type="chain" id="PRO_0000288003" description="Energy-coupling factor transporter ATP-binding protein EcfA1">
    <location>
        <begin position="1"/>
        <end position="279"/>
    </location>
</feature>
<feature type="domain" description="ABC transporter" evidence="1">
    <location>
        <begin position="5"/>
        <end position="240"/>
    </location>
</feature>
<feature type="binding site" evidence="1">
    <location>
        <begin position="40"/>
        <end position="47"/>
    </location>
    <ligand>
        <name>ATP</name>
        <dbReference type="ChEBI" id="CHEBI:30616"/>
    </ligand>
</feature>
<organism>
    <name type="scientific">Streptococcus pyogenes serotype M4 (strain MGAS10750)</name>
    <dbReference type="NCBI Taxonomy" id="370554"/>
    <lineage>
        <taxon>Bacteria</taxon>
        <taxon>Bacillati</taxon>
        <taxon>Bacillota</taxon>
        <taxon>Bacilli</taxon>
        <taxon>Lactobacillales</taxon>
        <taxon>Streptococcaceae</taxon>
        <taxon>Streptococcus</taxon>
    </lineage>
</organism>
<dbReference type="EC" id="7.-.-.-" evidence="1"/>
<dbReference type="EMBL" id="CP000262">
    <property type="protein sequence ID" value="ABF38912.1"/>
    <property type="status" value="ALT_INIT"/>
    <property type="molecule type" value="Genomic_DNA"/>
</dbReference>
<dbReference type="SMR" id="Q1J449"/>
<dbReference type="KEGG" id="spi:MGAS10750_Spy1962"/>
<dbReference type="HOGENOM" id="CLU_000604_1_22_9"/>
<dbReference type="Proteomes" id="UP000002434">
    <property type="component" value="Chromosome"/>
</dbReference>
<dbReference type="GO" id="GO:0043190">
    <property type="term" value="C:ATP-binding cassette (ABC) transporter complex"/>
    <property type="evidence" value="ECO:0007669"/>
    <property type="project" value="TreeGrafter"/>
</dbReference>
<dbReference type="GO" id="GO:0005524">
    <property type="term" value="F:ATP binding"/>
    <property type="evidence" value="ECO:0007669"/>
    <property type="project" value="UniProtKB-KW"/>
</dbReference>
<dbReference type="GO" id="GO:0016887">
    <property type="term" value="F:ATP hydrolysis activity"/>
    <property type="evidence" value="ECO:0007669"/>
    <property type="project" value="InterPro"/>
</dbReference>
<dbReference type="GO" id="GO:0042626">
    <property type="term" value="F:ATPase-coupled transmembrane transporter activity"/>
    <property type="evidence" value="ECO:0007669"/>
    <property type="project" value="TreeGrafter"/>
</dbReference>
<dbReference type="CDD" id="cd03225">
    <property type="entry name" value="ABC_cobalt_CbiO_domain1"/>
    <property type="match status" value="1"/>
</dbReference>
<dbReference type="FunFam" id="3.40.50.300:FF:000224">
    <property type="entry name" value="Energy-coupling factor transporter ATP-binding protein EcfA"/>
    <property type="match status" value="1"/>
</dbReference>
<dbReference type="Gene3D" id="3.40.50.300">
    <property type="entry name" value="P-loop containing nucleotide triphosphate hydrolases"/>
    <property type="match status" value="1"/>
</dbReference>
<dbReference type="InterPro" id="IPR003593">
    <property type="entry name" value="AAA+_ATPase"/>
</dbReference>
<dbReference type="InterPro" id="IPR003439">
    <property type="entry name" value="ABC_transporter-like_ATP-bd"/>
</dbReference>
<dbReference type="InterPro" id="IPR017871">
    <property type="entry name" value="ABC_transporter-like_CS"/>
</dbReference>
<dbReference type="InterPro" id="IPR015856">
    <property type="entry name" value="ABC_transpr_CbiO/EcfA_su"/>
</dbReference>
<dbReference type="InterPro" id="IPR050095">
    <property type="entry name" value="ECF_ABC_transporter_ATP-bd"/>
</dbReference>
<dbReference type="InterPro" id="IPR030947">
    <property type="entry name" value="EcfA_1"/>
</dbReference>
<dbReference type="InterPro" id="IPR027417">
    <property type="entry name" value="P-loop_NTPase"/>
</dbReference>
<dbReference type="NCBIfam" id="TIGR04520">
    <property type="entry name" value="ECF_ATPase_1"/>
    <property type="match status" value="1"/>
</dbReference>
<dbReference type="NCBIfam" id="NF010156">
    <property type="entry name" value="PRK13635.1"/>
    <property type="match status" value="1"/>
</dbReference>
<dbReference type="NCBIfam" id="NF010167">
    <property type="entry name" value="PRK13648.1"/>
    <property type="match status" value="1"/>
</dbReference>
<dbReference type="PANTHER" id="PTHR43553:SF24">
    <property type="entry name" value="ENERGY-COUPLING FACTOR TRANSPORTER ATP-BINDING PROTEIN ECFA1"/>
    <property type="match status" value="1"/>
</dbReference>
<dbReference type="PANTHER" id="PTHR43553">
    <property type="entry name" value="HEAVY METAL TRANSPORTER"/>
    <property type="match status" value="1"/>
</dbReference>
<dbReference type="Pfam" id="PF00005">
    <property type="entry name" value="ABC_tran"/>
    <property type="match status" value="1"/>
</dbReference>
<dbReference type="SMART" id="SM00382">
    <property type="entry name" value="AAA"/>
    <property type="match status" value="1"/>
</dbReference>
<dbReference type="SUPFAM" id="SSF52540">
    <property type="entry name" value="P-loop containing nucleoside triphosphate hydrolases"/>
    <property type="match status" value="1"/>
</dbReference>
<dbReference type="PROSITE" id="PS00211">
    <property type="entry name" value="ABC_TRANSPORTER_1"/>
    <property type="match status" value="1"/>
</dbReference>
<dbReference type="PROSITE" id="PS50893">
    <property type="entry name" value="ABC_TRANSPORTER_2"/>
    <property type="match status" value="1"/>
</dbReference>
<dbReference type="PROSITE" id="PS51246">
    <property type="entry name" value="CBIO"/>
    <property type="match status" value="1"/>
</dbReference>
<reference key="1">
    <citation type="journal article" date="2006" name="Proc. Natl. Acad. Sci. U.S.A.">
        <title>Molecular genetic anatomy of inter- and intraserotype variation in the human bacterial pathogen group A Streptococcus.</title>
        <authorList>
            <person name="Beres S.B."/>
            <person name="Richter E.W."/>
            <person name="Nagiec M.J."/>
            <person name="Sumby P."/>
            <person name="Porcella S.F."/>
            <person name="DeLeo F.R."/>
            <person name="Musser J.M."/>
        </authorList>
    </citation>
    <scope>NUCLEOTIDE SEQUENCE [LARGE SCALE GENOMIC DNA]</scope>
    <source>
        <strain>MGAS10750</strain>
    </source>
</reference>
<protein>
    <recommendedName>
        <fullName evidence="1">Energy-coupling factor transporter ATP-binding protein EcfA1</fullName>
        <shortName evidence="1">ECF transporter A component EcfA1</shortName>
        <ecNumber evidence="1">7.-.-.-</ecNumber>
    </recommendedName>
</protein>
<keyword id="KW-0067">ATP-binding</keyword>
<keyword id="KW-1003">Cell membrane</keyword>
<keyword id="KW-0472">Membrane</keyword>
<keyword id="KW-0547">Nucleotide-binding</keyword>
<keyword id="KW-1278">Translocase</keyword>
<keyword id="KW-0813">Transport</keyword>
<sequence>MSAIIELKKVTFNYHKDQEKPTLDGVSFHVKQGEWLSIIGHNGSGKSTTIRLIDGLLEPESGSIIVDGDLLTITNVWEIRHKIGMVFQNPDNQFVGATVEDDVAFGLENKGIAHEDIKERVNHALELVGMQNFKEKEPARLSGGQKQRVAIAGAVAMKPKIIILDEATSMLDPKGRLELIKTIKNIRDDYQLTVISITHDLDEVALSDRVLVMKDGQVESTSTPEQLFARGDELLQLGLDIPFTTSVVQMLQEEGYPIDYGYLTEKELENQLCQLISKM</sequence>
<comment type="function">
    <text evidence="1">ATP-binding (A) component of a common energy-coupling factor (ECF) ABC-transporter complex. Unlike classic ABC transporters this ECF transporter provides the energy necessary to transport a number of different substrates.</text>
</comment>
<comment type="subunit">
    <text evidence="1">Forms a stable energy-coupling factor (ECF) transporter complex composed of 2 membrane-embedded substrate-binding proteins (S component), 2 ATP-binding proteins (A component) and 2 transmembrane proteins (T component).</text>
</comment>
<comment type="subcellular location">
    <subcellularLocation>
        <location evidence="1">Cell membrane</location>
        <topology evidence="1">Peripheral membrane protein</topology>
    </subcellularLocation>
</comment>
<comment type="similarity">
    <text evidence="1">Belongs to the ABC transporter superfamily. Energy-coupling factor EcfA family.</text>
</comment>
<comment type="sequence caution" evidence="2">
    <conflict type="erroneous initiation">
        <sequence resource="EMBL-CDS" id="ABF38912"/>
    </conflict>
    <text>Extended N-terminus.</text>
</comment>
<gene>
    <name evidence="1" type="primary">ecfA1</name>
    <name type="synonym">cbiO1</name>
    <name type="ordered locus">MGAS10750_Spy1962</name>
</gene>
<evidence type="ECO:0000255" key="1">
    <source>
        <dbReference type="HAMAP-Rule" id="MF_01710"/>
    </source>
</evidence>
<evidence type="ECO:0000305" key="2"/>
<name>ECFA1_STRPF</name>